<feature type="chain" id="PRO_0000317117" description="RNA binding protein fox-1 homolog 2">
    <location>
        <begin position="1"/>
        <end position="411"/>
    </location>
</feature>
<feature type="domain" description="RRM" evidence="2">
    <location>
        <begin position="173"/>
        <end position="249"/>
    </location>
</feature>
<feature type="region of interest" description="Disordered" evidence="3">
    <location>
        <begin position="16"/>
        <end position="175"/>
    </location>
</feature>
<feature type="compositionally biased region" description="Polar residues" evidence="3">
    <location>
        <begin position="58"/>
        <end position="83"/>
    </location>
</feature>
<feature type="compositionally biased region" description="Polar residues" evidence="3">
    <location>
        <begin position="99"/>
        <end position="119"/>
    </location>
</feature>
<feature type="compositionally biased region" description="Low complexity" evidence="3">
    <location>
        <begin position="135"/>
        <end position="165"/>
    </location>
</feature>
<feature type="site" description="Interaction with RNA" evidence="1">
    <location>
        <position position="174"/>
    </location>
</feature>
<feature type="site" description="Interaction with RNA" evidence="1">
    <location>
        <position position="182"/>
    </location>
</feature>
<feature type="site" description="Interaction with RNA" evidence="1">
    <location>
        <position position="183"/>
    </location>
</feature>
<feature type="site" description="Interaction with RNA" evidence="1">
    <location>
        <position position="207"/>
    </location>
</feature>
<feature type="site" description="Interaction with RNA" evidence="1">
    <location>
        <position position="212"/>
    </location>
</feature>
<feature type="site" description="Interaction with RNA" evidence="1">
    <location>
        <position position="216"/>
    </location>
</feature>
<feature type="site" description="Interaction with RNA" evidence="1">
    <location>
        <position position="240"/>
    </location>
</feature>
<feature type="site" description="Interaction with RNA" evidence="1">
    <location>
        <position position="250"/>
    </location>
</feature>
<feature type="splice variant" id="VSP_030901" description="In isoform 2." evidence="5">
    <original>AV</original>
    <variation>AAAPGLQADVSLATEAGVPLPGPRGVNTYIPLII</variation>
    <location>
        <begin position="281"/>
        <end position="282"/>
    </location>
</feature>
<proteinExistence type="evidence at protein level"/>
<name>RFOX2_XENLA</name>
<sequence length="411" mass="43566">MADAVMSDAHLLGFNTRGTKRESDQQLHLGSSGASGAGVKRQRVEPEQQEPGNPMSMPVSQAYQGFAPLNSQGNQEPTATPDTMVQPFAAIPFPPPPQNGLSTDYGSQHTQDYATQSTEHGIPLYGGGQSLAEHSAPATSTANASSTTDGSQTEGQQSQSQNNENSETKASPKRLHVSNIPFRFRDPDLRQMFGQFGKILDVEIIFNERGSKGFGFVTFETSADADRAREKLHSTVVEGRKIEVNNATARVMTNKKSVTPYGNGWKLSPVVGAVYGPELYAVPGFPYPTAAAAATTAAAFRGAHLRGRGRTVYGAVRAVPPTAIPTYPGVLYQDGFYGTELYGGYAAYRYAQPATAATAATAAAAAAAAYSDGYGRVYTADPYHTLAPATSYGVGAVASLYRGGYSRFAPY</sequence>
<comment type="function">
    <text evidence="1">RNA-binding protein that regulates alternative splicing events by binding to 5'-UGCAUGU-3' elements. Regulates alternative splicing of tissue-specific exons (By similarity).</text>
</comment>
<comment type="subunit">
    <text evidence="4">Interacts with papd4/gld2.</text>
</comment>
<comment type="subcellular location">
    <subcellularLocation>
        <location evidence="1">Nucleus</location>
    </subcellularLocation>
    <subcellularLocation>
        <location evidence="1">Cytoplasm</location>
    </subcellularLocation>
</comment>
<comment type="alternative products">
    <event type="alternative splicing"/>
    <isoform>
        <id>A4F5G6-1</id>
        <name>1</name>
        <sequence type="displayed"/>
    </isoform>
    <isoform>
        <id>A4F5G6-2</id>
        <name>2</name>
        <sequence type="described" ref="VSP_030901"/>
    </isoform>
</comment>
<evidence type="ECO:0000250" key="1"/>
<evidence type="ECO:0000255" key="2">
    <source>
        <dbReference type="PROSITE-ProRule" id="PRU00176"/>
    </source>
</evidence>
<evidence type="ECO:0000256" key="3">
    <source>
        <dbReference type="SAM" id="MobiDB-lite"/>
    </source>
</evidence>
<evidence type="ECO:0000269" key="4">
    <source>
    </source>
</evidence>
<evidence type="ECO:0000303" key="5">
    <source>
    </source>
</evidence>
<protein>
    <recommendedName>
        <fullName>RNA binding protein fox-1 homolog 2</fullName>
    </recommendedName>
    <alternativeName>
        <fullName>Fox-1 homolog B</fullName>
    </alternativeName>
    <alternativeName>
        <fullName>RNA-binding motif protein 9</fullName>
    </alternativeName>
    <alternativeName>
        <fullName>RNA-binding protein 9</fullName>
    </alternativeName>
</protein>
<keyword id="KW-0025">Alternative splicing</keyword>
<keyword id="KW-0963">Cytoplasm</keyword>
<keyword id="KW-0507">mRNA processing</keyword>
<keyword id="KW-0508">mRNA splicing</keyword>
<keyword id="KW-0539">Nucleus</keyword>
<keyword id="KW-1185">Reference proteome</keyword>
<keyword id="KW-0694">RNA-binding</keyword>
<dbReference type="EMBL" id="AM419007">
    <property type="protein sequence ID" value="CAL91350.1"/>
    <property type="molecule type" value="mRNA"/>
</dbReference>
<dbReference type="EMBL" id="AM419008">
    <property type="protein sequence ID" value="CAL91351.1"/>
    <property type="molecule type" value="mRNA"/>
</dbReference>
<dbReference type="RefSeq" id="NP_001085103.2">
    <molecule id="A4F5G6-1"/>
    <property type="nucleotide sequence ID" value="NM_001091634.2"/>
</dbReference>
<dbReference type="SMR" id="A4F5G6"/>
<dbReference type="DNASU" id="432174"/>
<dbReference type="GeneID" id="432174"/>
<dbReference type="KEGG" id="xla:432174"/>
<dbReference type="AGR" id="Xenbase:XB-GENE-6255985"/>
<dbReference type="CTD" id="432174"/>
<dbReference type="Xenbase" id="XB-GENE-6255985">
    <property type="gene designation" value="rbfox2.L"/>
</dbReference>
<dbReference type="OrthoDB" id="5382468at2759"/>
<dbReference type="Proteomes" id="UP000186698">
    <property type="component" value="Chromosome 4L"/>
</dbReference>
<dbReference type="Bgee" id="432174">
    <property type="expression patterns" value="Expressed in neurula embryo and 19 other cell types or tissues"/>
</dbReference>
<dbReference type="GO" id="GO:0005737">
    <property type="term" value="C:cytoplasm"/>
    <property type="evidence" value="ECO:0000318"/>
    <property type="project" value="GO_Central"/>
</dbReference>
<dbReference type="GO" id="GO:0005634">
    <property type="term" value="C:nucleus"/>
    <property type="evidence" value="ECO:0000318"/>
    <property type="project" value="GO_Central"/>
</dbReference>
<dbReference type="GO" id="GO:0003729">
    <property type="term" value="F:mRNA binding"/>
    <property type="evidence" value="ECO:0000318"/>
    <property type="project" value="GO_Central"/>
</dbReference>
<dbReference type="GO" id="GO:0006397">
    <property type="term" value="P:mRNA processing"/>
    <property type="evidence" value="ECO:0007669"/>
    <property type="project" value="UniProtKB-KW"/>
</dbReference>
<dbReference type="GO" id="GO:0007399">
    <property type="term" value="P:nervous system development"/>
    <property type="evidence" value="ECO:0000318"/>
    <property type="project" value="GO_Central"/>
</dbReference>
<dbReference type="GO" id="GO:0000381">
    <property type="term" value="P:regulation of alternative mRNA splicing, via spliceosome"/>
    <property type="evidence" value="ECO:0000318"/>
    <property type="project" value="GO_Central"/>
</dbReference>
<dbReference type="GO" id="GO:0008380">
    <property type="term" value="P:RNA splicing"/>
    <property type="evidence" value="ECO:0007669"/>
    <property type="project" value="UniProtKB-KW"/>
</dbReference>
<dbReference type="CDD" id="cd12407">
    <property type="entry name" value="RRM_FOX1_like"/>
    <property type="match status" value="1"/>
</dbReference>
<dbReference type="FunFam" id="3.30.70.330:FF:000004">
    <property type="entry name" value="RNA binding fox-1 homolog 1"/>
    <property type="match status" value="1"/>
</dbReference>
<dbReference type="Gene3D" id="3.30.70.330">
    <property type="match status" value="1"/>
</dbReference>
<dbReference type="InterPro" id="IPR025670">
    <property type="entry name" value="Fox-1_C_dom"/>
</dbReference>
<dbReference type="InterPro" id="IPR034237">
    <property type="entry name" value="FOX1_RRM"/>
</dbReference>
<dbReference type="InterPro" id="IPR012677">
    <property type="entry name" value="Nucleotide-bd_a/b_plait_sf"/>
</dbReference>
<dbReference type="InterPro" id="IPR035979">
    <property type="entry name" value="RBD_domain_sf"/>
</dbReference>
<dbReference type="InterPro" id="IPR017325">
    <property type="entry name" value="RBFOX1-3"/>
</dbReference>
<dbReference type="InterPro" id="IPR047131">
    <property type="entry name" value="RBFOX1-like"/>
</dbReference>
<dbReference type="InterPro" id="IPR000504">
    <property type="entry name" value="RRM_dom"/>
</dbReference>
<dbReference type="PANTHER" id="PTHR15597">
    <property type="entry name" value="ATAXIN 2-BINDING PROTEIN 1-RELATED"/>
    <property type="match status" value="1"/>
</dbReference>
<dbReference type="PANTHER" id="PTHR15597:SF31">
    <property type="entry name" value="RNA BINDING PROTEIN FOX-1 HOMOLOG 2"/>
    <property type="match status" value="1"/>
</dbReference>
<dbReference type="Pfam" id="PF12414">
    <property type="entry name" value="Fox-1_C"/>
    <property type="match status" value="1"/>
</dbReference>
<dbReference type="Pfam" id="PF00076">
    <property type="entry name" value="RRM_1"/>
    <property type="match status" value="1"/>
</dbReference>
<dbReference type="PIRSF" id="PIRSF037932">
    <property type="entry name" value="Ataxin_2_bd_A2BP"/>
    <property type="match status" value="1"/>
</dbReference>
<dbReference type="SMART" id="SM00360">
    <property type="entry name" value="RRM"/>
    <property type="match status" value="1"/>
</dbReference>
<dbReference type="SUPFAM" id="SSF54928">
    <property type="entry name" value="RNA-binding domain, RBD"/>
    <property type="match status" value="1"/>
</dbReference>
<dbReference type="PROSITE" id="PS50102">
    <property type="entry name" value="RRM"/>
    <property type="match status" value="1"/>
</dbReference>
<accession>A4F5G6</accession>
<accession>A4F5G7</accession>
<gene>
    <name type="primary">rbfox2</name>
    <name type="synonym">fox2</name>
    <name type="synonym">rbm9</name>
</gene>
<reference key="1">
    <citation type="journal article" date="2008" name="FEBS J.">
        <title>Xenopus Rbm9 is a novel interactor of XGld2 in the cytoplasmic polyadenylation complex.</title>
        <authorList>
            <person name="Papin C."/>
            <person name="Rouget C."/>
            <person name="Mandart E."/>
        </authorList>
    </citation>
    <scope>NUCLEOTIDE SEQUENCE [MRNA] (ISOFORMS 1 AND 2)</scope>
    <scope>INTERACTION WITH PAPD4</scope>
    <source>
        <tissue>Oocyte</tissue>
    </source>
</reference>
<organism>
    <name type="scientific">Xenopus laevis</name>
    <name type="common">African clawed frog</name>
    <dbReference type="NCBI Taxonomy" id="8355"/>
    <lineage>
        <taxon>Eukaryota</taxon>
        <taxon>Metazoa</taxon>
        <taxon>Chordata</taxon>
        <taxon>Craniata</taxon>
        <taxon>Vertebrata</taxon>
        <taxon>Euteleostomi</taxon>
        <taxon>Amphibia</taxon>
        <taxon>Batrachia</taxon>
        <taxon>Anura</taxon>
        <taxon>Pipoidea</taxon>
        <taxon>Pipidae</taxon>
        <taxon>Xenopodinae</taxon>
        <taxon>Xenopus</taxon>
        <taxon>Xenopus</taxon>
    </lineage>
</organism>